<sequence>MEVMNLIEQPIKVTEWQQTYTYDSGIHSGANTCVPSVSSKGLMEEDEACGRQYTLKKTTTYTQAVPQSQGDLEYQMSTTARAKRVREAMCPGVTGEDSSLLLATQVEGQTTNLQRLAEPSQLLKSAIVHLINYQDDAELATRALPELTKLLNDEDPVVVTKAAMIVNQLSKKEASRRALMGSPQLVAAVVRTMQNTSDLDTARCTTSILHNLSHHREGLLAIFKSGGIPALVRMLSSPVESVLFYAITTLHNLLLYQEGAKMAVRLADGLQKMVPLLNKNNPKFLAITTDCLQLLAYGNQESKLIILANGGPQALVQIMRNYSYEKLLWTTSRVLKVLSVCPSNKPAIVEAGGMQALGKHLTSNSPRLVQNCLWTLRNLSDVATKQEGLESVLKILVNQLSVDDVNVLTCATGTLSNLTCNNSKNKTLVTQNSGVEALIHAILRAGDKDDITEPAVCALRHLTSRHPEAEMAQNSVRLNYGIPAIVKLLNQPNQWPLVKATIGLIRNLALCPANHAPLQEASVIPRLVQLLVKAHQDAQRHVAAGTQQPYTDGVRMEEIVEGCTGALHILARDPMNRMEIFRLNTIPLFVQLLYSSVENIQRVAAGVLCELAQDKEAADAIDAEGASSPLMELLHSRNEGTATYAAAVLFRISEDKNPDYRKRVSVELTNSLFKHDPAAWEAAQSMIPINEPYADDMDATYRPMYSSDVPLDPLEMHMDMDGDYPMDTYSDGLRPPYPAADHMLA</sequence>
<gene>
    <name evidence="2" type="primary">Jup</name>
</gene>
<name>PLAK_PIG</name>
<accession>Q8WNW3</accession>
<proteinExistence type="evidence at transcript level"/>
<organism>
    <name type="scientific">Sus scrofa</name>
    <name type="common">Pig</name>
    <dbReference type="NCBI Taxonomy" id="9823"/>
    <lineage>
        <taxon>Eukaryota</taxon>
        <taxon>Metazoa</taxon>
        <taxon>Chordata</taxon>
        <taxon>Craniata</taxon>
        <taxon>Vertebrata</taxon>
        <taxon>Euteleostomi</taxon>
        <taxon>Mammalia</taxon>
        <taxon>Eutheria</taxon>
        <taxon>Laurasiatheria</taxon>
        <taxon>Artiodactyla</taxon>
        <taxon>Suina</taxon>
        <taxon>Suidae</taxon>
        <taxon>Sus</taxon>
    </lineage>
</organism>
<keyword id="KW-0007">Acetylation</keyword>
<keyword id="KW-0130">Cell adhesion</keyword>
<keyword id="KW-0965">Cell junction</keyword>
<keyword id="KW-1003">Cell membrane</keyword>
<keyword id="KW-0963">Cytoplasm</keyword>
<keyword id="KW-0206">Cytoskeleton</keyword>
<keyword id="KW-0325">Glycoprotein</keyword>
<keyword id="KW-0472">Membrane</keyword>
<keyword id="KW-0539">Nucleus</keyword>
<keyword id="KW-0597">Phosphoprotein</keyword>
<keyword id="KW-1185">Reference proteome</keyword>
<keyword id="KW-0677">Repeat</keyword>
<feature type="chain" id="PRO_0000064280" description="Junction plakoglobin">
    <location>
        <begin position="1"/>
        <end position="745"/>
    </location>
</feature>
<feature type="repeat" description="ARM 1">
    <location>
        <begin position="132"/>
        <end position="171"/>
    </location>
</feature>
<feature type="repeat" description="ARM 2">
    <location>
        <begin position="172"/>
        <end position="215"/>
    </location>
</feature>
<feature type="repeat" description="ARM 3">
    <location>
        <begin position="216"/>
        <end position="255"/>
    </location>
</feature>
<feature type="repeat" description="ARM 4">
    <location>
        <begin position="258"/>
        <end position="297"/>
    </location>
</feature>
<feature type="repeat" description="ARM 5">
    <location>
        <begin position="298"/>
        <end position="341"/>
    </location>
</feature>
<feature type="repeat" description="ARM 6">
    <location>
        <begin position="342"/>
        <end position="381"/>
    </location>
</feature>
<feature type="repeat" description="ARM 7">
    <location>
        <begin position="383"/>
        <end position="420"/>
    </location>
</feature>
<feature type="repeat" description="ARM 8">
    <location>
        <begin position="423"/>
        <end position="464"/>
    </location>
</feature>
<feature type="repeat" description="ARM 9">
    <location>
        <begin position="470"/>
        <end position="510"/>
    </location>
</feature>
<feature type="repeat" description="ARM 10">
    <location>
        <begin position="512"/>
        <end position="551"/>
    </location>
</feature>
<feature type="repeat" description="ARM 11">
    <location>
        <begin position="574"/>
        <end position="613"/>
    </location>
</feature>
<feature type="repeat" description="ARM 12">
    <location>
        <begin position="615"/>
        <end position="661"/>
    </location>
</feature>
<feature type="region of interest" description="Interaction with DSC1 and DSG1" evidence="1">
    <location>
        <begin position="132"/>
        <end position="297"/>
    </location>
</feature>
<feature type="region of interest" description="Interaction with DSC1" evidence="1">
    <location>
        <begin position="574"/>
        <end position="661"/>
    </location>
</feature>
<feature type="modified residue" description="N-acetylmethionine" evidence="2">
    <location>
        <position position="1"/>
    </location>
</feature>
<feature type="modified residue" description="Phosphoserine" evidence="2">
    <location>
        <position position="99"/>
    </location>
</feature>
<feature type="modified residue" description="Phosphoserine" evidence="2">
    <location>
        <position position="125"/>
    </location>
</feature>
<feature type="modified residue" description="Phosphoserine" evidence="2">
    <location>
        <position position="182"/>
    </location>
</feature>
<feature type="modified residue" description="Phosphoserine" evidence="2">
    <location>
        <position position="665"/>
    </location>
</feature>
<feature type="modified residue" description="Phosphoserine" evidence="2">
    <location>
        <position position="730"/>
    </location>
</feature>
<feature type="glycosylation site" description="O-linked (GlcNAc) threonine" evidence="1">
    <location>
        <position position="14"/>
    </location>
</feature>
<comment type="function">
    <text evidence="1">Common junctional plaque protein. The membrane-associated plaques are architectural elements in an important strategic position to influence the arrangement and function of both the cytoskeleton and the cells within the tissue. The presence of plakoglobin in both the desmosomes and in the intermediate junctions suggests that it plays a central role in the structure and function of submembranous plaques. Acts as a substrate for VE-PTP and is required by it to stimulate VE-cadherin function in endothelial cells. Can replace beta-catenin in E-cadherin/catenin adhesion complexes which are proposed to couple cadherins to the actin cytoskeleton (By similarity).</text>
</comment>
<comment type="subunit">
    <text evidence="1 2">Homodimer. Component of an E-cadherin/catenin adhesion complex composed of at least E-cadherin/CDH1 and gamma-catenin/JUP, and possibly alpha-catenin/CTNNA1; the complex is located to adherens junctions. The stable association of CTNNA1 is controversial as CTNNA1 was shown not to bind to F-actin when assembled in the complex. Interacts with MUC1. Interacts with CAV1. Interacts with PTPRJ. Interacts with DSG1. Interacts with DSC1 and DSC2. Interacts with PKP2 (By similarity). Interacts with PKP3 (via N-terminus); the interaction is required for PKP3 localization to desmosome cell-cell junctions (By similarity). Interacts with DSG4 (By similarity).</text>
</comment>
<comment type="subcellular location">
    <subcellularLocation>
        <location evidence="2">Cell junction</location>
        <location evidence="2">Adherens junction</location>
    </subcellularLocation>
    <subcellularLocation>
        <location evidence="2">Cell junction</location>
        <location evidence="2">Desmosome</location>
    </subcellularLocation>
    <subcellularLocation>
        <location evidence="2">Cytoplasm</location>
        <location evidence="2">Cytoskeleton</location>
    </subcellularLocation>
    <subcellularLocation>
        <location evidence="2">Cell membrane</location>
        <topology evidence="2">Peripheral membrane protein</topology>
    </subcellularLocation>
    <subcellularLocation>
        <location evidence="3">Cytoplasm</location>
    </subcellularLocation>
    <subcellularLocation>
        <location evidence="3">Cell junction</location>
    </subcellularLocation>
    <subcellularLocation>
        <location evidence="3">Nucleus</location>
    </subcellularLocation>
    <text evidence="2">Cytoplasmic in a soluble and membrane-associated form. Colocalizes with DSG4 at desmosomes (By similarity).</text>
</comment>
<comment type="domain">
    <text evidence="1">The entire ARM repeats region mediates binding to CDH1/E-cadherin. The N-terminus and first three ARM repeats are sufficient for binding to DSG1. The N-terminus and first ARM repeat are sufficient for association with CTNNA1. DSC1 association requires both ends of the ARM repeat region (By similarity).</text>
</comment>
<comment type="PTM">
    <text evidence="1">May be phosphorylated by FER.</text>
</comment>
<comment type="similarity">
    <text evidence="4">Belongs to the beta-catenin family.</text>
</comment>
<protein>
    <recommendedName>
        <fullName>Junction plakoglobin</fullName>
    </recommendedName>
</protein>
<dbReference type="EMBL" id="AB046172">
    <property type="protein sequence ID" value="BAB82985.1"/>
    <property type="molecule type" value="mRNA"/>
</dbReference>
<dbReference type="RefSeq" id="NP_999488.1">
    <property type="nucleotide sequence ID" value="NM_214323.1"/>
</dbReference>
<dbReference type="RefSeq" id="XP_005668876.1">
    <property type="nucleotide sequence ID" value="XM_005668819.2"/>
</dbReference>
<dbReference type="RefSeq" id="XP_005668877.1">
    <property type="nucleotide sequence ID" value="XM_005668820.2"/>
</dbReference>
<dbReference type="RefSeq" id="XP_005668878.1">
    <property type="nucleotide sequence ID" value="XM_005668821.2"/>
</dbReference>
<dbReference type="RefSeq" id="XP_005668879.1">
    <property type="nucleotide sequence ID" value="XM_005668822.2"/>
</dbReference>
<dbReference type="RefSeq" id="XP_013836408.1">
    <property type="nucleotide sequence ID" value="XM_013980954.1"/>
</dbReference>
<dbReference type="RefSeq" id="XP_013836409.1">
    <property type="nucleotide sequence ID" value="XM_013980955.1"/>
</dbReference>
<dbReference type="RefSeq" id="XP_013836410.1">
    <property type="nucleotide sequence ID" value="XM_013980956.1"/>
</dbReference>
<dbReference type="SMR" id="Q8WNW3"/>
<dbReference type="FunCoup" id="Q8WNW3">
    <property type="interactions" value="563"/>
</dbReference>
<dbReference type="STRING" id="9823.ENSSSCP00000018469"/>
<dbReference type="GlyCosmos" id="Q8WNW3">
    <property type="glycosylation" value="1 site, No reported glycans"/>
</dbReference>
<dbReference type="GlyGen" id="Q8WNW3">
    <property type="glycosylation" value="1 site"/>
</dbReference>
<dbReference type="PaxDb" id="9823-ENSSSCP00000018469"/>
<dbReference type="PeptideAtlas" id="Q8WNW3"/>
<dbReference type="Ensembl" id="ENSSSCT00015058360.1">
    <property type="protein sequence ID" value="ENSSSCP00015023399.1"/>
    <property type="gene ID" value="ENSSSCG00015043128.1"/>
</dbReference>
<dbReference type="Ensembl" id="ENSSSCT00015058494.1">
    <property type="protein sequence ID" value="ENSSSCP00015023451.1"/>
    <property type="gene ID" value="ENSSSCG00015043128.1"/>
</dbReference>
<dbReference type="Ensembl" id="ENSSSCT00015058555.1">
    <property type="protein sequence ID" value="ENSSSCP00015023478.1"/>
    <property type="gene ID" value="ENSSSCG00015043128.1"/>
</dbReference>
<dbReference type="Ensembl" id="ENSSSCT00015058643.1">
    <property type="protein sequence ID" value="ENSSSCP00015023519.1"/>
    <property type="gene ID" value="ENSSSCG00015043128.1"/>
</dbReference>
<dbReference type="Ensembl" id="ENSSSCT00030090362.1">
    <property type="protein sequence ID" value="ENSSSCP00030041637.1"/>
    <property type="gene ID" value="ENSSSCG00030064636.1"/>
</dbReference>
<dbReference type="Ensembl" id="ENSSSCT00035031200.1">
    <property type="protein sequence ID" value="ENSSSCP00035012212.1"/>
    <property type="gene ID" value="ENSSSCG00035023778.1"/>
</dbReference>
<dbReference type="Ensembl" id="ENSSSCT00040036223.1">
    <property type="protein sequence ID" value="ENSSSCP00040015026.1"/>
    <property type="gene ID" value="ENSSSCG00040026885.1"/>
</dbReference>
<dbReference type="Ensembl" id="ENSSSCT00040036325.1">
    <property type="protein sequence ID" value="ENSSSCP00040015063.1"/>
    <property type="gene ID" value="ENSSSCG00040026885.1"/>
</dbReference>
<dbReference type="Ensembl" id="ENSSSCT00040036393.1">
    <property type="protein sequence ID" value="ENSSSCP00040015095.1"/>
    <property type="gene ID" value="ENSSSCG00040026885.1"/>
</dbReference>
<dbReference type="Ensembl" id="ENSSSCT00040036477.1">
    <property type="protein sequence ID" value="ENSSSCP00040015137.1"/>
    <property type="gene ID" value="ENSSSCG00040026885.1"/>
</dbReference>
<dbReference type="Ensembl" id="ENSSSCT00045064721.1">
    <property type="protein sequence ID" value="ENSSSCP00045045742.1"/>
    <property type="gene ID" value="ENSSSCG00045037452.1"/>
</dbReference>
<dbReference type="Ensembl" id="ENSSSCT00050030549.1">
    <property type="protein sequence ID" value="ENSSSCP00050012734.1"/>
    <property type="gene ID" value="ENSSSCG00050022624.1"/>
</dbReference>
<dbReference type="Ensembl" id="ENSSSCT00055023932.1">
    <property type="protein sequence ID" value="ENSSSCP00055018943.1"/>
    <property type="gene ID" value="ENSSSCG00055012213.1"/>
</dbReference>
<dbReference type="Ensembl" id="ENSSSCT00060031590.1">
    <property type="protein sequence ID" value="ENSSSCP00060013537.1"/>
    <property type="gene ID" value="ENSSSCG00060023262.1"/>
</dbReference>
<dbReference type="Ensembl" id="ENSSSCT00060031597.1">
    <property type="protein sequence ID" value="ENSSSCP00060013540.1"/>
    <property type="gene ID" value="ENSSSCG00060023262.1"/>
</dbReference>
<dbReference type="Ensembl" id="ENSSSCT00060031599.1">
    <property type="protein sequence ID" value="ENSSSCP00060013542.1"/>
    <property type="gene ID" value="ENSSSCG00060023262.1"/>
</dbReference>
<dbReference type="Ensembl" id="ENSSSCT00060031609.1">
    <property type="protein sequence ID" value="ENSSSCP00060013546.1"/>
    <property type="gene ID" value="ENSSSCG00060023262.1"/>
</dbReference>
<dbReference type="Ensembl" id="ENSSSCT00065013724.1">
    <property type="protein sequence ID" value="ENSSSCP00065005606.1"/>
    <property type="gene ID" value="ENSSSCG00065010328.1"/>
</dbReference>
<dbReference type="Ensembl" id="ENSSSCT00070029321.1">
    <property type="protein sequence ID" value="ENSSSCP00070024435.1"/>
    <property type="gene ID" value="ENSSSCG00070014905.1"/>
</dbReference>
<dbReference type="Ensembl" id="ENSSSCT00090007978">
    <property type="protein sequence ID" value="ENSSSCP00090004790"/>
    <property type="gene ID" value="ENSSSCG00090004554"/>
</dbReference>
<dbReference type="Ensembl" id="ENSSSCT00105069936">
    <property type="protein sequence ID" value="ENSSSCP00105049506"/>
    <property type="gene ID" value="ENSSSCG00105036674"/>
</dbReference>
<dbReference type="Ensembl" id="ENSSSCT00110074498">
    <property type="protein sequence ID" value="ENSSSCP00110052602"/>
    <property type="gene ID" value="ENSSSCG00110039023"/>
</dbReference>
<dbReference type="Ensembl" id="ENSSSCT00115038925">
    <property type="protein sequence ID" value="ENSSSCP00115036725"/>
    <property type="gene ID" value="ENSSSCG00115021977"/>
</dbReference>
<dbReference type="Ensembl" id="ENSSSCT00130021003">
    <property type="protein sequence ID" value="ENSSSCP00130022914"/>
    <property type="gene ID" value="ENSSSCG00130016909"/>
</dbReference>
<dbReference type="GeneID" id="397592"/>
<dbReference type="KEGG" id="ssc:397592"/>
<dbReference type="CTD" id="3728"/>
<dbReference type="eggNOG" id="KOG4203">
    <property type="taxonomic scope" value="Eukaryota"/>
</dbReference>
<dbReference type="HOGENOM" id="CLU_008757_1_1_1"/>
<dbReference type="InParanoid" id="Q8WNW3"/>
<dbReference type="OrthoDB" id="195736at2759"/>
<dbReference type="TreeFam" id="TF317997"/>
<dbReference type="Reactome" id="R-SSC-418990">
    <property type="pathway name" value="Adherens junctions interactions"/>
</dbReference>
<dbReference type="Reactome" id="R-SSC-5218920">
    <property type="pathway name" value="VEGFR2 mediated vascular permeability"/>
</dbReference>
<dbReference type="Reactome" id="R-SSC-6798695">
    <property type="pathway name" value="Neutrophil degranulation"/>
</dbReference>
<dbReference type="Reactome" id="R-SSC-6805567">
    <property type="pathway name" value="Keratinization"/>
</dbReference>
<dbReference type="Reactome" id="R-SSC-6809371">
    <property type="pathway name" value="Formation of the cornified envelope"/>
</dbReference>
<dbReference type="Reactome" id="R-SSC-8980692">
    <property type="pathway name" value="RHOA GTPase cycle"/>
</dbReference>
<dbReference type="Reactome" id="R-SSC-9013026">
    <property type="pathway name" value="RHOB GTPase cycle"/>
</dbReference>
<dbReference type="Reactome" id="R-SSC-9013106">
    <property type="pathway name" value="RHOC GTPase cycle"/>
</dbReference>
<dbReference type="Reactome" id="R-SSC-9013148">
    <property type="pathway name" value="CDC42 GTPase cycle"/>
</dbReference>
<dbReference type="Reactome" id="R-SSC-9013406">
    <property type="pathway name" value="RHOQ GTPase cycle"/>
</dbReference>
<dbReference type="Reactome" id="R-SSC-9013407">
    <property type="pathway name" value="RHOH GTPase cycle"/>
</dbReference>
<dbReference type="Reactome" id="R-SSC-9762292">
    <property type="pathway name" value="Regulation of CDH11 function"/>
</dbReference>
<dbReference type="Proteomes" id="UP000008227">
    <property type="component" value="Unplaced"/>
</dbReference>
<dbReference type="Proteomes" id="UP000314985">
    <property type="component" value="Chromosome 12"/>
</dbReference>
<dbReference type="Proteomes" id="UP000694570">
    <property type="component" value="Unplaced"/>
</dbReference>
<dbReference type="Proteomes" id="UP000694571">
    <property type="component" value="Unplaced"/>
</dbReference>
<dbReference type="Proteomes" id="UP000694720">
    <property type="component" value="Unplaced"/>
</dbReference>
<dbReference type="Proteomes" id="UP000694722">
    <property type="component" value="Unplaced"/>
</dbReference>
<dbReference type="Proteomes" id="UP000694723">
    <property type="component" value="Unplaced"/>
</dbReference>
<dbReference type="Proteomes" id="UP000694724">
    <property type="component" value="Unplaced"/>
</dbReference>
<dbReference type="Proteomes" id="UP000694725">
    <property type="component" value="Unplaced"/>
</dbReference>
<dbReference type="Proteomes" id="UP000694726">
    <property type="component" value="Unplaced"/>
</dbReference>
<dbReference type="Proteomes" id="UP000694727">
    <property type="component" value="Unplaced"/>
</dbReference>
<dbReference type="Proteomes" id="UP000694728">
    <property type="component" value="Unplaced"/>
</dbReference>
<dbReference type="GO" id="GO:0005912">
    <property type="term" value="C:adherens junction"/>
    <property type="evidence" value="ECO:0000318"/>
    <property type="project" value="GO_Central"/>
</dbReference>
<dbReference type="GO" id="GO:0016342">
    <property type="term" value="C:catenin complex"/>
    <property type="evidence" value="ECO:0000318"/>
    <property type="project" value="GO_Central"/>
</dbReference>
<dbReference type="GO" id="GO:0005737">
    <property type="term" value="C:cytoplasm"/>
    <property type="evidence" value="ECO:0000318"/>
    <property type="project" value="GO_Central"/>
</dbReference>
<dbReference type="GO" id="GO:0005856">
    <property type="term" value="C:cytoskeleton"/>
    <property type="evidence" value="ECO:0007669"/>
    <property type="project" value="UniProtKB-SubCell"/>
</dbReference>
<dbReference type="GO" id="GO:0030057">
    <property type="term" value="C:desmosome"/>
    <property type="evidence" value="ECO:0000250"/>
    <property type="project" value="UniProtKB"/>
</dbReference>
<dbReference type="GO" id="GO:0005634">
    <property type="term" value="C:nucleus"/>
    <property type="evidence" value="ECO:0000318"/>
    <property type="project" value="GO_Central"/>
</dbReference>
<dbReference type="GO" id="GO:0045294">
    <property type="term" value="F:alpha-catenin binding"/>
    <property type="evidence" value="ECO:0000318"/>
    <property type="project" value="GO_Central"/>
</dbReference>
<dbReference type="GO" id="GO:0045296">
    <property type="term" value="F:cadherin binding"/>
    <property type="evidence" value="ECO:0000318"/>
    <property type="project" value="GO_Central"/>
</dbReference>
<dbReference type="GO" id="GO:0016922">
    <property type="term" value="F:nuclear receptor binding"/>
    <property type="evidence" value="ECO:0000318"/>
    <property type="project" value="GO_Central"/>
</dbReference>
<dbReference type="GO" id="GO:0019903">
    <property type="term" value="F:protein phosphatase binding"/>
    <property type="evidence" value="ECO:0000318"/>
    <property type="project" value="GO_Central"/>
</dbReference>
<dbReference type="GO" id="GO:0003713">
    <property type="term" value="F:transcription coactivator activity"/>
    <property type="evidence" value="ECO:0000318"/>
    <property type="project" value="GO_Central"/>
</dbReference>
<dbReference type="GO" id="GO:0060070">
    <property type="term" value="P:canonical Wnt signaling pathway"/>
    <property type="evidence" value="ECO:0000318"/>
    <property type="project" value="GO_Central"/>
</dbReference>
<dbReference type="GO" id="GO:0098609">
    <property type="term" value="P:cell-cell adhesion"/>
    <property type="evidence" value="ECO:0000318"/>
    <property type="project" value="GO_Central"/>
</dbReference>
<dbReference type="GO" id="GO:0045944">
    <property type="term" value="P:positive regulation of transcription by RNA polymerase II"/>
    <property type="evidence" value="ECO:0000318"/>
    <property type="project" value="GO_Central"/>
</dbReference>
<dbReference type="FunFam" id="1.25.10.10:FF:000015">
    <property type="entry name" value="Catenin beta-1"/>
    <property type="match status" value="1"/>
</dbReference>
<dbReference type="Gene3D" id="1.25.10.10">
    <property type="entry name" value="Leucine-rich Repeat Variant"/>
    <property type="match status" value="1"/>
</dbReference>
<dbReference type="InterPro" id="IPR011989">
    <property type="entry name" value="ARM-like"/>
</dbReference>
<dbReference type="InterPro" id="IPR016024">
    <property type="entry name" value="ARM-type_fold"/>
</dbReference>
<dbReference type="InterPro" id="IPR000225">
    <property type="entry name" value="Armadillo"/>
</dbReference>
<dbReference type="InterPro" id="IPR013284">
    <property type="entry name" value="Beta-catenin"/>
</dbReference>
<dbReference type="PANTHER" id="PTHR45976">
    <property type="entry name" value="ARMADILLO SEGMENT POLARITY PROTEIN"/>
    <property type="match status" value="1"/>
</dbReference>
<dbReference type="Pfam" id="PF00514">
    <property type="entry name" value="Arm"/>
    <property type="match status" value="3"/>
</dbReference>
<dbReference type="PRINTS" id="PR01869">
    <property type="entry name" value="BCATNINFAMLY"/>
</dbReference>
<dbReference type="SMART" id="SM00185">
    <property type="entry name" value="ARM"/>
    <property type="match status" value="12"/>
</dbReference>
<dbReference type="SUPFAM" id="SSF48371">
    <property type="entry name" value="ARM repeat"/>
    <property type="match status" value="1"/>
</dbReference>
<dbReference type="PROSITE" id="PS50176">
    <property type="entry name" value="ARM_REPEAT"/>
    <property type="match status" value="9"/>
</dbReference>
<evidence type="ECO:0000250" key="1"/>
<evidence type="ECO:0000250" key="2">
    <source>
        <dbReference type="UniProtKB" id="P14923"/>
    </source>
</evidence>
<evidence type="ECO:0000250" key="3">
    <source>
        <dbReference type="UniProtKB" id="Q9PVF7"/>
    </source>
</evidence>
<evidence type="ECO:0000305" key="4"/>
<reference key="1">
    <citation type="submission" date="2000-07" db="EMBL/GenBank/DDBJ databases">
        <title>Transcriptional upregulation of p27Kip1 during contact-induced growth arrest in endothelial cells.</title>
        <authorList>
            <person name="Hirano M."/>
            <person name="Hirano K."/>
            <person name="Nishimura J."/>
            <person name="Kanaide H."/>
        </authorList>
    </citation>
    <scope>NUCLEOTIDE SEQUENCE [MRNA]</scope>
    <source>
        <tissue>Aortic endothelium</tissue>
    </source>
</reference>